<accession>Q8XA23</accession>
<organism>
    <name type="scientific">Escherichia coli O157:H7</name>
    <dbReference type="NCBI Taxonomy" id="83334"/>
    <lineage>
        <taxon>Bacteria</taxon>
        <taxon>Pseudomonadati</taxon>
        <taxon>Pseudomonadota</taxon>
        <taxon>Gammaproteobacteria</taxon>
        <taxon>Enterobacterales</taxon>
        <taxon>Enterobacteriaceae</taxon>
        <taxon>Escherichia</taxon>
    </lineage>
</organism>
<evidence type="ECO:0000250" key="1">
    <source>
        <dbReference type="UniProtKB" id="P10902"/>
    </source>
</evidence>
<evidence type="ECO:0000305" key="2"/>
<name>NADB_ECO57</name>
<reference key="1">
    <citation type="journal article" date="2001" name="Nature">
        <title>Genome sequence of enterohaemorrhagic Escherichia coli O157:H7.</title>
        <authorList>
            <person name="Perna N.T."/>
            <person name="Plunkett G. III"/>
            <person name="Burland V."/>
            <person name="Mau B."/>
            <person name="Glasner J.D."/>
            <person name="Rose D.J."/>
            <person name="Mayhew G.F."/>
            <person name="Evans P.S."/>
            <person name="Gregor J."/>
            <person name="Kirkpatrick H.A."/>
            <person name="Posfai G."/>
            <person name="Hackett J."/>
            <person name="Klink S."/>
            <person name="Boutin A."/>
            <person name="Shao Y."/>
            <person name="Miller L."/>
            <person name="Grotbeck E.J."/>
            <person name="Davis N.W."/>
            <person name="Lim A."/>
            <person name="Dimalanta E.T."/>
            <person name="Potamousis K."/>
            <person name="Apodaca J."/>
            <person name="Anantharaman T.S."/>
            <person name="Lin J."/>
            <person name="Yen G."/>
            <person name="Schwartz D.C."/>
            <person name="Welch R.A."/>
            <person name="Blattner F.R."/>
        </authorList>
    </citation>
    <scope>NUCLEOTIDE SEQUENCE [LARGE SCALE GENOMIC DNA]</scope>
    <source>
        <strain>O157:H7 / EDL933 / ATCC 700927 / EHEC</strain>
    </source>
</reference>
<reference key="2">
    <citation type="journal article" date="2001" name="DNA Res.">
        <title>Complete genome sequence of enterohemorrhagic Escherichia coli O157:H7 and genomic comparison with a laboratory strain K-12.</title>
        <authorList>
            <person name="Hayashi T."/>
            <person name="Makino K."/>
            <person name="Ohnishi M."/>
            <person name="Kurokawa K."/>
            <person name="Ishii K."/>
            <person name="Yokoyama K."/>
            <person name="Han C.-G."/>
            <person name="Ohtsubo E."/>
            <person name="Nakayama K."/>
            <person name="Murata T."/>
            <person name="Tanaka M."/>
            <person name="Tobe T."/>
            <person name="Iida T."/>
            <person name="Takami H."/>
            <person name="Honda T."/>
            <person name="Sasakawa C."/>
            <person name="Ogasawara N."/>
            <person name="Yasunaga T."/>
            <person name="Kuhara S."/>
            <person name="Shiba T."/>
            <person name="Hattori M."/>
            <person name="Shinagawa H."/>
        </authorList>
    </citation>
    <scope>NUCLEOTIDE SEQUENCE [LARGE SCALE GENOMIC DNA]</scope>
    <source>
        <strain>O157:H7 / Sakai / RIMD 0509952 / EHEC</strain>
    </source>
</reference>
<protein>
    <recommendedName>
        <fullName evidence="1">L-aspartate oxidase</fullName>
        <shortName evidence="1">LASPO</shortName>
        <ecNumber evidence="1">1.4.3.16</ecNumber>
    </recommendedName>
    <alternativeName>
        <fullName evidence="1">L-aspartate:fumarate oxidoreductase</fullName>
        <ecNumber evidence="1">1.5.99.-</ecNumber>
    </alternativeName>
    <alternativeName>
        <fullName evidence="1">Quinolinate synthase B</fullName>
    </alternativeName>
</protein>
<keyword id="KW-0963">Cytoplasm</keyword>
<keyword id="KW-0274">FAD</keyword>
<keyword id="KW-0285">Flavoprotein</keyword>
<keyword id="KW-0547">Nucleotide-binding</keyword>
<keyword id="KW-0560">Oxidoreductase</keyword>
<keyword id="KW-0662">Pyridine nucleotide biosynthesis</keyword>
<keyword id="KW-1185">Reference proteome</keyword>
<gene>
    <name type="primary">nadB</name>
    <name type="ordered locus">Z3856</name>
    <name type="ordered locus">ECs3440</name>
</gene>
<proteinExistence type="inferred from homology"/>
<feature type="chain" id="PRO_0000184385" description="L-aspartate oxidase">
    <location>
        <begin position="1"/>
        <end position="540"/>
    </location>
</feature>
<feature type="active site" description="Proton donor/acceptor" evidence="1">
    <location>
        <position position="290"/>
    </location>
</feature>
<feature type="binding site" evidence="1">
    <location>
        <begin position="16"/>
        <end position="19"/>
    </location>
    <ligand>
        <name>FAD</name>
        <dbReference type="ChEBI" id="CHEBI:57692"/>
    </ligand>
</feature>
<feature type="binding site" evidence="1">
    <location>
        <position position="38"/>
    </location>
    <ligand>
        <name>FAD</name>
        <dbReference type="ChEBI" id="CHEBI:57692"/>
    </ligand>
</feature>
<feature type="binding site" evidence="1">
    <location>
        <begin position="45"/>
        <end position="52"/>
    </location>
    <ligand>
        <name>FAD</name>
        <dbReference type="ChEBI" id="CHEBI:57692"/>
    </ligand>
</feature>
<feature type="binding site" evidence="1">
    <location>
        <position position="223"/>
    </location>
    <ligand>
        <name>FAD</name>
        <dbReference type="ChEBI" id="CHEBI:57692"/>
    </ligand>
</feature>
<feature type="binding site" evidence="1">
    <location>
        <position position="375"/>
    </location>
    <ligand>
        <name>FAD</name>
        <dbReference type="ChEBI" id="CHEBI:57692"/>
    </ligand>
</feature>
<feature type="binding site" evidence="1">
    <location>
        <begin position="391"/>
        <end position="392"/>
    </location>
    <ligand>
        <name>FAD</name>
        <dbReference type="ChEBI" id="CHEBI:57692"/>
    </ligand>
</feature>
<feature type="site" description="Important in orienting the L-aspartate substrate" evidence="1">
    <location>
        <position position="121"/>
    </location>
</feature>
<sequence>MNTLLEHSCDVLIIGSGAAGLSLALRLADQHQVIVLSKGPVTEGSTFYAQGGIAAVFDETDSIDSHVEDTLIAGAGICDRHAVEFVASNARSCVQWLIDQGVLFDTHIQPNGEESYHLTREGGHSHRRILHAADATGREVETTLVSKALNHPNIRVLERSNAVDLIISDKIGLPGTRRVVGAWVWNRNKEKVETCHAKAVVLATGGASKVYQYTTNPDISSGDGIAMAWRAGCRVANLEFNQFHPTALYHPQARNFLLTEALRGEGAYLKRPDGTRFMPDFDVRGELAPRDIVARAIDHEMKRLGADCMFLDISHKPADFIRQHFPMIYEKLLGLGIDLTQEPVPIVPAAHYTCGGVMVDDHGRTDVEGLYAIGEVSYTGLHGANRMASNSLLECLVYGWSAAEDITRRMPYAHDISTLPPWDESRVENPDERVIIQHNWHELRLFMWDYVGIVRTTKRLERALRRITMLQQEIDEYYAHFRVSNNLLELRNLVQVAELIVRCAMMRKESRGLHFTLDYPELLTHSGPSILSPGNHYINR</sequence>
<comment type="function">
    <text evidence="1">Catalyzes the oxidation of L-aspartate to iminoaspartate, the first step in the de novo biosynthesis of NAD(+) (By similarity). Can use either oxygen or fumarate as electron acceptors, which allows the enzyme to be functional under aerobic and anaerobic conditions (By similarity).</text>
</comment>
<comment type="catalytic activity">
    <reaction evidence="1">
        <text>L-aspartate + O2 = iminosuccinate + H2O2</text>
        <dbReference type="Rhea" id="RHEA:25876"/>
        <dbReference type="ChEBI" id="CHEBI:15379"/>
        <dbReference type="ChEBI" id="CHEBI:16240"/>
        <dbReference type="ChEBI" id="CHEBI:29991"/>
        <dbReference type="ChEBI" id="CHEBI:77875"/>
        <dbReference type="EC" id="1.4.3.16"/>
    </reaction>
    <physiologicalReaction direction="left-to-right" evidence="1">
        <dbReference type="Rhea" id="RHEA:25877"/>
    </physiologicalReaction>
</comment>
<comment type="catalytic activity">
    <reaction evidence="1">
        <text>fumarate + L-aspartate = iminosuccinate + succinate</text>
        <dbReference type="Rhea" id="RHEA:30043"/>
        <dbReference type="ChEBI" id="CHEBI:29806"/>
        <dbReference type="ChEBI" id="CHEBI:29991"/>
        <dbReference type="ChEBI" id="CHEBI:30031"/>
        <dbReference type="ChEBI" id="CHEBI:77875"/>
    </reaction>
    <physiologicalReaction direction="left-to-right" evidence="1">
        <dbReference type="Rhea" id="RHEA:30044"/>
    </physiologicalReaction>
</comment>
<comment type="cofactor">
    <cofactor evidence="1">
        <name>FAD</name>
        <dbReference type="ChEBI" id="CHEBI:57692"/>
    </cofactor>
    <text evidence="1">Binds 1 FAD per subunit.</text>
</comment>
<comment type="pathway">
    <text evidence="1">Cofactor biosynthesis; NAD(+) biosynthesis; iminoaspartate from L-aspartate (oxidase route): step 1/1.</text>
</comment>
<comment type="subcellular location">
    <subcellularLocation>
        <location evidence="1">Cytoplasm</location>
    </subcellularLocation>
</comment>
<comment type="similarity">
    <text evidence="2">Belongs to the FAD-dependent oxidoreductase 2 family. NadB subfamily.</text>
</comment>
<dbReference type="EC" id="1.4.3.16" evidence="1"/>
<dbReference type="EC" id="1.5.99.-" evidence="1"/>
<dbReference type="EMBL" id="AE005174">
    <property type="protein sequence ID" value="AAG57690.1"/>
    <property type="molecule type" value="Genomic_DNA"/>
</dbReference>
<dbReference type="EMBL" id="BA000007">
    <property type="protein sequence ID" value="BAB36863.1"/>
    <property type="molecule type" value="Genomic_DNA"/>
</dbReference>
<dbReference type="PIR" id="F85903">
    <property type="entry name" value="F85903"/>
</dbReference>
<dbReference type="PIR" id="H91058">
    <property type="entry name" value="H91058"/>
</dbReference>
<dbReference type="RefSeq" id="NP_311467.1">
    <property type="nucleotide sequence ID" value="NC_002695.1"/>
</dbReference>
<dbReference type="RefSeq" id="WP_001094279.1">
    <property type="nucleotide sequence ID" value="NZ_VOAI01000001.1"/>
</dbReference>
<dbReference type="SMR" id="Q8XA23"/>
<dbReference type="STRING" id="155864.Z3856"/>
<dbReference type="GeneID" id="914886"/>
<dbReference type="KEGG" id="ece:Z3856"/>
<dbReference type="KEGG" id="ecs:ECs_3440"/>
<dbReference type="PATRIC" id="fig|386585.9.peg.3595"/>
<dbReference type="eggNOG" id="COG0029">
    <property type="taxonomic scope" value="Bacteria"/>
</dbReference>
<dbReference type="HOGENOM" id="CLU_014312_3_0_6"/>
<dbReference type="OMA" id="HCVQWLI"/>
<dbReference type="UniPathway" id="UPA00253">
    <property type="reaction ID" value="UER00326"/>
</dbReference>
<dbReference type="Proteomes" id="UP000000558">
    <property type="component" value="Chromosome"/>
</dbReference>
<dbReference type="Proteomes" id="UP000002519">
    <property type="component" value="Chromosome"/>
</dbReference>
<dbReference type="GO" id="GO:0005737">
    <property type="term" value="C:cytoplasm"/>
    <property type="evidence" value="ECO:0007669"/>
    <property type="project" value="UniProtKB-SubCell"/>
</dbReference>
<dbReference type="GO" id="GO:0008734">
    <property type="term" value="F:L-aspartate oxidase activity"/>
    <property type="evidence" value="ECO:0007669"/>
    <property type="project" value="UniProtKB-EC"/>
</dbReference>
<dbReference type="GO" id="GO:0000166">
    <property type="term" value="F:nucleotide binding"/>
    <property type="evidence" value="ECO:0007669"/>
    <property type="project" value="UniProtKB-KW"/>
</dbReference>
<dbReference type="GO" id="GO:0034628">
    <property type="term" value="P:'de novo' NAD biosynthetic process from L-aspartate"/>
    <property type="evidence" value="ECO:0007669"/>
    <property type="project" value="TreeGrafter"/>
</dbReference>
<dbReference type="FunFam" id="1.20.58.100:FF:000002">
    <property type="entry name" value="L-aspartate oxidase"/>
    <property type="match status" value="1"/>
</dbReference>
<dbReference type="FunFam" id="3.50.50.60:FF:000060">
    <property type="entry name" value="L-aspartate oxidase"/>
    <property type="match status" value="1"/>
</dbReference>
<dbReference type="FunFam" id="3.90.700.10:FF:000002">
    <property type="entry name" value="L-aspartate oxidase"/>
    <property type="match status" value="1"/>
</dbReference>
<dbReference type="Gene3D" id="3.50.50.60">
    <property type="entry name" value="FAD/NAD(P)-binding domain"/>
    <property type="match status" value="1"/>
</dbReference>
<dbReference type="Gene3D" id="1.20.58.100">
    <property type="entry name" value="Fumarate reductase/succinate dehydrogenase flavoprotein-like, C-terminal domain"/>
    <property type="match status" value="1"/>
</dbReference>
<dbReference type="Gene3D" id="3.90.700.10">
    <property type="entry name" value="Succinate dehydrogenase/fumarate reductase flavoprotein, catalytic domain"/>
    <property type="match status" value="1"/>
</dbReference>
<dbReference type="InterPro" id="IPR003953">
    <property type="entry name" value="FAD-dep_OxRdtase_2_FAD-bd"/>
</dbReference>
<dbReference type="InterPro" id="IPR036188">
    <property type="entry name" value="FAD/NAD-bd_sf"/>
</dbReference>
<dbReference type="InterPro" id="IPR037099">
    <property type="entry name" value="Fum_R/Succ_DH_flav-like_C_sf"/>
</dbReference>
<dbReference type="InterPro" id="IPR015939">
    <property type="entry name" value="Fum_Rdtase/Succ_DH_flav-like_C"/>
</dbReference>
<dbReference type="InterPro" id="IPR005288">
    <property type="entry name" value="NadB"/>
</dbReference>
<dbReference type="InterPro" id="IPR027477">
    <property type="entry name" value="Succ_DH/fumarate_Rdtase_cat_sf"/>
</dbReference>
<dbReference type="NCBIfam" id="TIGR00551">
    <property type="entry name" value="nadB"/>
    <property type="match status" value="1"/>
</dbReference>
<dbReference type="NCBIfam" id="NF006567">
    <property type="entry name" value="PRK09077.1"/>
    <property type="match status" value="1"/>
</dbReference>
<dbReference type="PANTHER" id="PTHR42716">
    <property type="entry name" value="L-ASPARTATE OXIDASE"/>
    <property type="match status" value="1"/>
</dbReference>
<dbReference type="PANTHER" id="PTHR42716:SF2">
    <property type="entry name" value="L-ASPARTATE OXIDASE, CHLOROPLASTIC"/>
    <property type="match status" value="1"/>
</dbReference>
<dbReference type="Pfam" id="PF00890">
    <property type="entry name" value="FAD_binding_2"/>
    <property type="match status" value="1"/>
</dbReference>
<dbReference type="Pfam" id="PF02910">
    <property type="entry name" value="Succ_DH_flav_C"/>
    <property type="match status" value="1"/>
</dbReference>
<dbReference type="PIRSF" id="PIRSF000171">
    <property type="entry name" value="SDHA_APRA_LASPO"/>
    <property type="match status" value="1"/>
</dbReference>
<dbReference type="PRINTS" id="PR00368">
    <property type="entry name" value="FADPNR"/>
</dbReference>
<dbReference type="PRINTS" id="PR00411">
    <property type="entry name" value="PNDRDTASEI"/>
</dbReference>
<dbReference type="SUPFAM" id="SSF51905">
    <property type="entry name" value="FAD/NAD(P)-binding domain"/>
    <property type="match status" value="1"/>
</dbReference>
<dbReference type="SUPFAM" id="SSF46977">
    <property type="entry name" value="Succinate dehydrogenase/fumarate reductase flavoprotein C-terminal domain"/>
    <property type="match status" value="1"/>
</dbReference>
<dbReference type="SUPFAM" id="SSF56425">
    <property type="entry name" value="Succinate dehydrogenase/fumarate reductase flavoprotein, catalytic domain"/>
    <property type="match status" value="1"/>
</dbReference>